<protein>
    <recommendedName>
        <fullName evidence="1">7-cyano-7-deazaguanine synthase</fullName>
        <ecNumber evidence="1">6.3.4.20</ecNumber>
    </recommendedName>
    <alternativeName>
        <fullName evidence="1">7-cyano-7-carbaguanine synthase</fullName>
    </alternativeName>
    <alternativeName>
        <fullName evidence="1">PreQ(0) synthase</fullName>
    </alternativeName>
    <alternativeName>
        <fullName evidence="1">Queuosine biosynthesis protein QueC</fullName>
    </alternativeName>
</protein>
<dbReference type="EC" id="6.3.4.20" evidence="1"/>
<dbReference type="EMBL" id="BA000017">
    <property type="protein sequence ID" value="BAB56874.1"/>
    <property type="molecule type" value="Genomic_DNA"/>
</dbReference>
<dbReference type="RefSeq" id="WP_000446724.1">
    <property type="nucleotide sequence ID" value="NC_002758.2"/>
</dbReference>
<dbReference type="SMR" id="Q99VR1"/>
<dbReference type="KEGG" id="sav:SAV0712"/>
<dbReference type="HOGENOM" id="CLU_081854_0_0_9"/>
<dbReference type="PhylomeDB" id="Q99VR1"/>
<dbReference type="UniPathway" id="UPA00391"/>
<dbReference type="Proteomes" id="UP000002481">
    <property type="component" value="Chromosome"/>
</dbReference>
<dbReference type="GO" id="GO:0005524">
    <property type="term" value="F:ATP binding"/>
    <property type="evidence" value="ECO:0007669"/>
    <property type="project" value="UniProtKB-UniRule"/>
</dbReference>
<dbReference type="GO" id="GO:0016879">
    <property type="term" value="F:ligase activity, forming carbon-nitrogen bonds"/>
    <property type="evidence" value="ECO:0007669"/>
    <property type="project" value="UniProtKB-UniRule"/>
</dbReference>
<dbReference type="GO" id="GO:0008270">
    <property type="term" value="F:zinc ion binding"/>
    <property type="evidence" value="ECO:0007669"/>
    <property type="project" value="UniProtKB-UniRule"/>
</dbReference>
<dbReference type="GO" id="GO:0008616">
    <property type="term" value="P:queuosine biosynthetic process"/>
    <property type="evidence" value="ECO:0007669"/>
    <property type="project" value="UniProtKB-UniRule"/>
</dbReference>
<dbReference type="CDD" id="cd01995">
    <property type="entry name" value="QueC-like"/>
    <property type="match status" value="1"/>
</dbReference>
<dbReference type="FunFam" id="3.40.50.620:FF:000017">
    <property type="entry name" value="7-cyano-7-deazaguanine synthase"/>
    <property type="match status" value="1"/>
</dbReference>
<dbReference type="Gene3D" id="3.40.50.620">
    <property type="entry name" value="HUPs"/>
    <property type="match status" value="1"/>
</dbReference>
<dbReference type="HAMAP" id="MF_01633">
    <property type="entry name" value="QueC"/>
    <property type="match status" value="1"/>
</dbReference>
<dbReference type="InterPro" id="IPR018317">
    <property type="entry name" value="QueC"/>
</dbReference>
<dbReference type="InterPro" id="IPR014729">
    <property type="entry name" value="Rossmann-like_a/b/a_fold"/>
</dbReference>
<dbReference type="NCBIfam" id="TIGR00364">
    <property type="entry name" value="7-cyano-7-deazaguanine synthase QueC"/>
    <property type="match status" value="1"/>
</dbReference>
<dbReference type="PANTHER" id="PTHR42914">
    <property type="entry name" value="7-CYANO-7-DEAZAGUANINE SYNTHASE"/>
    <property type="match status" value="1"/>
</dbReference>
<dbReference type="PANTHER" id="PTHR42914:SF1">
    <property type="entry name" value="7-CYANO-7-DEAZAGUANINE SYNTHASE"/>
    <property type="match status" value="1"/>
</dbReference>
<dbReference type="Pfam" id="PF06508">
    <property type="entry name" value="QueC"/>
    <property type="match status" value="1"/>
</dbReference>
<dbReference type="PIRSF" id="PIRSF006293">
    <property type="entry name" value="ExsB"/>
    <property type="match status" value="1"/>
</dbReference>
<dbReference type="SUPFAM" id="SSF52402">
    <property type="entry name" value="Adenine nucleotide alpha hydrolases-like"/>
    <property type="match status" value="1"/>
</dbReference>
<gene>
    <name evidence="1" type="primary">queC</name>
    <name type="ordered locus">SAV0712</name>
</gene>
<evidence type="ECO:0000255" key="1">
    <source>
        <dbReference type="HAMAP-Rule" id="MF_01633"/>
    </source>
</evidence>
<feature type="chain" id="PRO_0000246932" description="7-cyano-7-deazaguanine synthase">
    <location>
        <begin position="1"/>
        <end position="222"/>
    </location>
</feature>
<feature type="binding site" evidence="1">
    <location>
        <begin position="14"/>
        <end position="24"/>
    </location>
    <ligand>
        <name>ATP</name>
        <dbReference type="ChEBI" id="CHEBI:30616"/>
    </ligand>
</feature>
<feature type="binding site" evidence="1">
    <location>
        <position position="190"/>
    </location>
    <ligand>
        <name>Zn(2+)</name>
        <dbReference type="ChEBI" id="CHEBI:29105"/>
    </ligand>
</feature>
<feature type="binding site" evidence="1">
    <location>
        <position position="199"/>
    </location>
    <ligand>
        <name>Zn(2+)</name>
        <dbReference type="ChEBI" id="CHEBI:29105"/>
    </ligand>
</feature>
<feature type="binding site" evidence="1">
    <location>
        <position position="202"/>
    </location>
    <ligand>
        <name>Zn(2+)</name>
        <dbReference type="ChEBI" id="CHEBI:29105"/>
    </ligand>
</feature>
<feature type="binding site" evidence="1">
    <location>
        <position position="205"/>
    </location>
    <ligand>
        <name>Zn(2+)</name>
        <dbReference type="ChEBI" id="CHEBI:29105"/>
    </ligand>
</feature>
<proteinExistence type="inferred from homology"/>
<name>QUEC_STAAM</name>
<reference key="1">
    <citation type="journal article" date="2001" name="Lancet">
        <title>Whole genome sequencing of meticillin-resistant Staphylococcus aureus.</title>
        <authorList>
            <person name="Kuroda M."/>
            <person name="Ohta T."/>
            <person name="Uchiyama I."/>
            <person name="Baba T."/>
            <person name="Yuzawa H."/>
            <person name="Kobayashi I."/>
            <person name="Cui L."/>
            <person name="Oguchi A."/>
            <person name="Aoki K."/>
            <person name="Nagai Y."/>
            <person name="Lian J.-Q."/>
            <person name="Ito T."/>
            <person name="Kanamori M."/>
            <person name="Matsumaru H."/>
            <person name="Maruyama A."/>
            <person name="Murakami H."/>
            <person name="Hosoyama A."/>
            <person name="Mizutani-Ui Y."/>
            <person name="Takahashi N.K."/>
            <person name="Sawano T."/>
            <person name="Inoue R."/>
            <person name="Kaito C."/>
            <person name="Sekimizu K."/>
            <person name="Hirakawa H."/>
            <person name="Kuhara S."/>
            <person name="Goto S."/>
            <person name="Yabuzaki J."/>
            <person name="Kanehisa M."/>
            <person name="Yamashita A."/>
            <person name="Oshima K."/>
            <person name="Furuya K."/>
            <person name="Yoshino C."/>
            <person name="Shiba T."/>
            <person name="Hattori M."/>
            <person name="Ogasawara N."/>
            <person name="Hayashi H."/>
            <person name="Hiramatsu K."/>
        </authorList>
    </citation>
    <scope>NUCLEOTIDE SEQUENCE [LARGE SCALE GENOMIC DNA]</scope>
    <source>
        <strain>Mu50 / ATCC 700699</strain>
    </source>
</reference>
<accession>Q99VR1</accession>
<sequence length="222" mass="24887">MESVLNNEKAIVVFSGGQDSTTCLFYAKKHFKEVELVTFNYGQRHDTEIEVAKQIAQDQGMKHHVLDMSLLSQLTPNALTQHDMEITNNEDGIPNTFVPARNLLFLSFAGALAYQIGAKHIITGVCETDFSGYPDCRDSFIKSMNVTLSLAMDKDFVIHTPLMWLNKAETWKLSDELEVLDYIRTKTLTCYNGIIGDGCGECPACHLRQRGLNQYLESKGAL</sequence>
<comment type="function">
    <text evidence="1">Catalyzes the ATP-dependent conversion of 7-carboxy-7-deazaguanine (CDG) to 7-cyano-7-deazaguanine (preQ(0)).</text>
</comment>
<comment type="catalytic activity">
    <reaction evidence="1">
        <text>7-carboxy-7-deazaguanine + NH4(+) + ATP = 7-cyano-7-deazaguanine + ADP + phosphate + H2O + H(+)</text>
        <dbReference type="Rhea" id="RHEA:27982"/>
        <dbReference type="ChEBI" id="CHEBI:15377"/>
        <dbReference type="ChEBI" id="CHEBI:15378"/>
        <dbReference type="ChEBI" id="CHEBI:28938"/>
        <dbReference type="ChEBI" id="CHEBI:30616"/>
        <dbReference type="ChEBI" id="CHEBI:43474"/>
        <dbReference type="ChEBI" id="CHEBI:45075"/>
        <dbReference type="ChEBI" id="CHEBI:61036"/>
        <dbReference type="ChEBI" id="CHEBI:456216"/>
        <dbReference type="EC" id="6.3.4.20"/>
    </reaction>
</comment>
<comment type="cofactor">
    <cofactor evidence="1">
        <name>Zn(2+)</name>
        <dbReference type="ChEBI" id="CHEBI:29105"/>
    </cofactor>
    <text evidence="1">Binds 1 zinc ion per subunit.</text>
</comment>
<comment type="pathway">
    <text evidence="1">Purine metabolism; 7-cyano-7-deazaguanine biosynthesis.</text>
</comment>
<comment type="subunit">
    <text evidence="1">Homodimer.</text>
</comment>
<comment type="similarity">
    <text evidence="1">Belongs to the QueC family.</text>
</comment>
<organism>
    <name type="scientific">Staphylococcus aureus (strain Mu50 / ATCC 700699)</name>
    <dbReference type="NCBI Taxonomy" id="158878"/>
    <lineage>
        <taxon>Bacteria</taxon>
        <taxon>Bacillati</taxon>
        <taxon>Bacillota</taxon>
        <taxon>Bacilli</taxon>
        <taxon>Bacillales</taxon>
        <taxon>Staphylococcaceae</taxon>
        <taxon>Staphylococcus</taxon>
    </lineage>
</organism>
<keyword id="KW-0067">ATP-binding</keyword>
<keyword id="KW-0436">Ligase</keyword>
<keyword id="KW-0479">Metal-binding</keyword>
<keyword id="KW-0547">Nucleotide-binding</keyword>
<keyword id="KW-0671">Queuosine biosynthesis</keyword>
<keyword id="KW-0862">Zinc</keyword>